<dbReference type="EC" id="2.1.1.-" evidence="1"/>
<dbReference type="EMBL" id="AY596297">
    <property type="protein sequence ID" value="AAV45314.1"/>
    <property type="molecule type" value="Genomic_DNA"/>
</dbReference>
<dbReference type="RefSeq" id="WP_011222920.1">
    <property type="nucleotide sequence ID" value="NC_006396.1"/>
</dbReference>
<dbReference type="SMR" id="Q5V588"/>
<dbReference type="STRING" id="272569.rrnAC0257"/>
<dbReference type="PaxDb" id="272569-rrnAC0257"/>
<dbReference type="EnsemblBacteria" id="AAV45314">
    <property type="protein sequence ID" value="AAV45314"/>
    <property type="gene ID" value="rrnAC0257"/>
</dbReference>
<dbReference type="GeneID" id="40154552"/>
<dbReference type="KEGG" id="hma:rrnAC0257"/>
<dbReference type="PATRIC" id="fig|272569.17.peg.1052"/>
<dbReference type="eggNOG" id="arCOG04131">
    <property type="taxonomic scope" value="Archaea"/>
</dbReference>
<dbReference type="HOGENOM" id="CLU_041220_0_2_2"/>
<dbReference type="Proteomes" id="UP000001169">
    <property type="component" value="Chromosome I"/>
</dbReference>
<dbReference type="GO" id="GO:0005737">
    <property type="term" value="C:cytoplasm"/>
    <property type="evidence" value="ECO:0007669"/>
    <property type="project" value="UniProtKB-SubCell"/>
</dbReference>
<dbReference type="GO" id="GO:0003723">
    <property type="term" value="F:RNA binding"/>
    <property type="evidence" value="ECO:0007669"/>
    <property type="project" value="UniProtKB-KW"/>
</dbReference>
<dbReference type="GO" id="GO:0000179">
    <property type="term" value="F:rRNA (adenine-N6,N6-)-dimethyltransferase activity"/>
    <property type="evidence" value="ECO:0007669"/>
    <property type="project" value="InterPro"/>
</dbReference>
<dbReference type="CDD" id="cd02440">
    <property type="entry name" value="AdoMet_MTases"/>
    <property type="match status" value="1"/>
</dbReference>
<dbReference type="Gene3D" id="1.10.8.100">
    <property type="entry name" value="Ribosomal RNA adenine dimethylase-like, domain 2"/>
    <property type="match status" value="1"/>
</dbReference>
<dbReference type="Gene3D" id="3.40.50.150">
    <property type="entry name" value="Vaccinia Virus protein VP39"/>
    <property type="match status" value="1"/>
</dbReference>
<dbReference type="HAMAP" id="MF_00607">
    <property type="entry name" value="16SrRNA_methyltr_A"/>
    <property type="match status" value="1"/>
</dbReference>
<dbReference type="InterPro" id="IPR001737">
    <property type="entry name" value="KsgA/Erm"/>
</dbReference>
<dbReference type="InterPro" id="IPR023165">
    <property type="entry name" value="rRNA_Ade_diMease-like_C"/>
</dbReference>
<dbReference type="InterPro" id="IPR020596">
    <property type="entry name" value="rRNA_Ade_Mease_Trfase_CS"/>
</dbReference>
<dbReference type="InterPro" id="IPR020598">
    <property type="entry name" value="rRNA_Ade_methylase_Trfase_N"/>
</dbReference>
<dbReference type="InterPro" id="IPR011530">
    <property type="entry name" value="rRNA_adenine_dimethylase"/>
</dbReference>
<dbReference type="InterPro" id="IPR029063">
    <property type="entry name" value="SAM-dependent_MTases_sf"/>
</dbReference>
<dbReference type="NCBIfam" id="TIGR00755">
    <property type="entry name" value="ksgA"/>
    <property type="match status" value="1"/>
</dbReference>
<dbReference type="NCBIfam" id="NF011486">
    <property type="entry name" value="PRK14896.1-1"/>
    <property type="match status" value="1"/>
</dbReference>
<dbReference type="PANTHER" id="PTHR11727">
    <property type="entry name" value="DIMETHYLADENOSINE TRANSFERASE"/>
    <property type="match status" value="1"/>
</dbReference>
<dbReference type="PANTHER" id="PTHR11727:SF7">
    <property type="entry name" value="DIMETHYLADENOSINE TRANSFERASE-RELATED"/>
    <property type="match status" value="1"/>
</dbReference>
<dbReference type="Pfam" id="PF00398">
    <property type="entry name" value="RrnaAD"/>
    <property type="match status" value="1"/>
</dbReference>
<dbReference type="SMART" id="SM00650">
    <property type="entry name" value="rADc"/>
    <property type="match status" value="1"/>
</dbReference>
<dbReference type="SUPFAM" id="SSF53335">
    <property type="entry name" value="S-adenosyl-L-methionine-dependent methyltransferases"/>
    <property type="match status" value="1"/>
</dbReference>
<dbReference type="PROSITE" id="PS01131">
    <property type="entry name" value="RRNA_A_DIMETH"/>
    <property type="match status" value="1"/>
</dbReference>
<dbReference type="PROSITE" id="PS51689">
    <property type="entry name" value="SAM_RNA_A_N6_MT"/>
    <property type="match status" value="1"/>
</dbReference>
<proteinExistence type="inferred from homology"/>
<protein>
    <recommendedName>
        <fullName evidence="1">Probable ribosomal RNA small subunit methyltransferase A</fullName>
        <ecNumber evidence="1">2.1.1.-</ecNumber>
    </recommendedName>
    <alternativeName>
        <fullName evidence="1">16S rRNA dimethyladenosine transferase</fullName>
    </alternativeName>
    <alternativeName>
        <fullName evidence="1">16S rRNA dimethylase</fullName>
    </alternativeName>
    <alternativeName>
        <fullName evidence="1">S-adenosylmethionine-6-N',N'-adenosyl(rRNA) dimethyltransferase</fullName>
    </alternativeName>
</protein>
<name>RSMA_HALMA</name>
<feature type="chain" id="PRO_0000101653" description="Probable ribosomal RNA small subunit methyltransferase A">
    <location>
        <begin position="1"/>
        <end position="285"/>
    </location>
</feature>
<feature type="binding site" evidence="1">
    <location>
        <position position="29"/>
    </location>
    <ligand>
        <name>S-adenosyl-L-methionine</name>
        <dbReference type="ChEBI" id="CHEBI:59789"/>
    </ligand>
</feature>
<feature type="binding site" evidence="1">
    <location>
        <position position="31"/>
    </location>
    <ligand>
        <name>S-adenosyl-L-methionine</name>
        <dbReference type="ChEBI" id="CHEBI:59789"/>
    </ligand>
</feature>
<feature type="binding site" evidence="1">
    <location>
        <position position="58"/>
    </location>
    <ligand>
        <name>S-adenosyl-L-methionine</name>
        <dbReference type="ChEBI" id="CHEBI:59789"/>
    </ligand>
</feature>
<feature type="binding site" evidence="1">
    <location>
        <position position="79"/>
    </location>
    <ligand>
        <name>S-adenosyl-L-methionine</name>
        <dbReference type="ChEBI" id="CHEBI:59789"/>
    </ligand>
</feature>
<feature type="binding site" evidence="1">
    <location>
        <position position="107"/>
    </location>
    <ligand>
        <name>S-adenosyl-L-methionine</name>
        <dbReference type="ChEBI" id="CHEBI:59789"/>
    </ligand>
</feature>
<feature type="binding site" evidence="1">
    <location>
        <position position="122"/>
    </location>
    <ligand>
        <name>S-adenosyl-L-methionine</name>
        <dbReference type="ChEBI" id="CHEBI:59789"/>
    </ligand>
</feature>
<keyword id="KW-0963">Cytoplasm</keyword>
<keyword id="KW-0489">Methyltransferase</keyword>
<keyword id="KW-1185">Reference proteome</keyword>
<keyword id="KW-0694">RNA-binding</keyword>
<keyword id="KW-0698">rRNA processing</keyword>
<keyword id="KW-0949">S-adenosyl-L-methionine</keyword>
<keyword id="KW-0808">Transferase</keyword>
<accession>Q5V588</accession>
<reference key="1">
    <citation type="journal article" date="2004" name="Genome Res.">
        <title>Genome sequence of Haloarcula marismortui: a halophilic archaeon from the Dead Sea.</title>
        <authorList>
            <person name="Baliga N.S."/>
            <person name="Bonneau R."/>
            <person name="Facciotti M.T."/>
            <person name="Pan M."/>
            <person name="Glusman G."/>
            <person name="Deutsch E.W."/>
            <person name="Shannon P."/>
            <person name="Chiu Y."/>
            <person name="Weng R.S."/>
            <person name="Gan R.R."/>
            <person name="Hung P."/>
            <person name="Date S.V."/>
            <person name="Marcotte E."/>
            <person name="Hood L."/>
            <person name="Ng W.V."/>
        </authorList>
    </citation>
    <scope>NUCLEOTIDE SEQUENCE [LARGE SCALE GENOMIC DNA]</scope>
    <source>
        <strain>ATCC 43049 / DSM 3752 / JCM 8966 / VKM B-1809</strain>
    </source>
</reference>
<comment type="function">
    <text evidence="1">Specifically dimethylates two adjacent adenosines in the loop of a conserved hairpin near the 3'-end of 16S rRNA in the 30S particle. May play a critical role in biogenesis of 30S subunits.</text>
</comment>
<comment type="subcellular location">
    <subcellularLocation>
        <location evidence="1">Cytoplasm</location>
    </subcellularLocation>
</comment>
<comment type="similarity">
    <text evidence="1">Belongs to the class I-like SAM-binding methyltransferase superfamily. rRNA adenine N(6)-methyltransferase family. RsmA subfamily.</text>
</comment>
<gene>
    <name evidence="1" type="primary">rsmA</name>
    <name evidence="1" type="synonym">ksgA</name>
    <name type="ordered locus">rrnAC0257</name>
</gene>
<sequence>MTTTETGTRDPDALVRRAGKRADTRQDQHFLVDDRVLDRIPEYATDADIDLSHVLEIGAGPGALTDRLLATAERVTAVERDPDFAAHLREEFTEEVAADRLTIVEGDALEVDLPDFTASISNLPYGASSEIAFRLLPEQRPLLLMFQQEFAERMAADPATDDYGRLSVTAGHYADVEVVETVPPEAFDPQPRVTSALVRTMPRTPDYTVPSDDFFMDFLKAVFTQRRKTMRNAVRNTAHISGLGDPDAVVEAADEGLMSARAGKLTPADFATLATLAYEVGQPEA</sequence>
<evidence type="ECO:0000255" key="1">
    <source>
        <dbReference type="HAMAP-Rule" id="MF_00607"/>
    </source>
</evidence>
<organism>
    <name type="scientific">Haloarcula marismortui (strain ATCC 43049 / DSM 3752 / JCM 8966 / VKM B-1809)</name>
    <name type="common">Halobacterium marismortui</name>
    <dbReference type="NCBI Taxonomy" id="272569"/>
    <lineage>
        <taxon>Archaea</taxon>
        <taxon>Methanobacteriati</taxon>
        <taxon>Methanobacteriota</taxon>
        <taxon>Stenosarchaea group</taxon>
        <taxon>Halobacteria</taxon>
        <taxon>Halobacteriales</taxon>
        <taxon>Haloarculaceae</taxon>
        <taxon>Haloarcula</taxon>
    </lineage>
</organism>